<sequence>MKTTFLDFEQPIAELEAKIEELRFVQDDSAVDISEEISRLAGKSQQLTKDIYANLTPWQVAQIARHPQRPYTLDYVREIFTDFHELHGDRAFADDLSIVGGLARFNGQACMVIGHQKGRDTKERALRNFGMSKPEGYRKAKRLMELADKFGLPIFTFVDTPGAFPGIDAEERGQSEAIGHNLYVMAGLKVPLIATIIGEGGSGGALAIAVGDVVQMLQFATYAVISPEGCASILWKTAEKAPEAAEALGLTAHRLKALGLIDKIVSEPLGGAHRDAKGMATMLKRSLAESLRQFQGMSVKELQARRHERLMAYGKFKETGAQE</sequence>
<accession>Q1LPF3</accession>
<comment type="function">
    <text evidence="1">Component of the acetyl coenzyme A carboxylase (ACC) complex. First, biotin carboxylase catalyzes the carboxylation of biotin on its carrier protein (BCCP) and then the CO(2) group is transferred by the carboxyltransferase to acetyl-CoA to form malonyl-CoA.</text>
</comment>
<comment type="catalytic activity">
    <reaction evidence="1">
        <text>N(6)-carboxybiotinyl-L-lysyl-[protein] + acetyl-CoA = N(6)-biotinyl-L-lysyl-[protein] + malonyl-CoA</text>
        <dbReference type="Rhea" id="RHEA:54728"/>
        <dbReference type="Rhea" id="RHEA-COMP:10505"/>
        <dbReference type="Rhea" id="RHEA-COMP:10506"/>
        <dbReference type="ChEBI" id="CHEBI:57288"/>
        <dbReference type="ChEBI" id="CHEBI:57384"/>
        <dbReference type="ChEBI" id="CHEBI:83144"/>
        <dbReference type="ChEBI" id="CHEBI:83145"/>
        <dbReference type="EC" id="2.1.3.15"/>
    </reaction>
</comment>
<comment type="pathway">
    <text evidence="1">Lipid metabolism; malonyl-CoA biosynthesis; malonyl-CoA from acetyl-CoA: step 1/1.</text>
</comment>
<comment type="subunit">
    <text evidence="1">Acetyl-CoA carboxylase is a heterohexamer composed of biotin carboxyl carrier protein (AccB), biotin carboxylase (AccC) and two subunits each of ACCase subunit alpha (AccA) and ACCase subunit beta (AccD).</text>
</comment>
<comment type="subcellular location">
    <subcellularLocation>
        <location evidence="1">Cytoplasm</location>
    </subcellularLocation>
</comment>
<comment type="similarity">
    <text evidence="1">Belongs to the AccA family.</text>
</comment>
<name>ACCA_CUPMC</name>
<reference key="1">
    <citation type="journal article" date="2010" name="PLoS ONE">
        <title>The complete genome sequence of Cupriavidus metallidurans strain CH34, a master survivalist in harsh and anthropogenic environments.</title>
        <authorList>
            <person name="Janssen P.J."/>
            <person name="Van Houdt R."/>
            <person name="Moors H."/>
            <person name="Monsieurs P."/>
            <person name="Morin N."/>
            <person name="Michaux A."/>
            <person name="Benotmane M.A."/>
            <person name="Leys N."/>
            <person name="Vallaeys T."/>
            <person name="Lapidus A."/>
            <person name="Monchy S."/>
            <person name="Medigue C."/>
            <person name="Taghavi S."/>
            <person name="McCorkle S."/>
            <person name="Dunn J."/>
            <person name="van der Lelie D."/>
            <person name="Mergeay M."/>
        </authorList>
    </citation>
    <scope>NUCLEOTIDE SEQUENCE [LARGE SCALE GENOMIC DNA]</scope>
    <source>
        <strain>ATCC 43123 / DSM 2839 / NBRC 102507 / CH34</strain>
    </source>
</reference>
<protein>
    <recommendedName>
        <fullName evidence="1">Acetyl-coenzyme A carboxylase carboxyl transferase subunit alpha</fullName>
        <shortName evidence="1">ACCase subunit alpha</shortName>
        <shortName evidence="1">Acetyl-CoA carboxylase carboxyltransferase subunit alpha</shortName>
        <ecNumber evidence="1">2.1.3.15</ecNumber>
    </recommendedName>
</protein>
<feature type="chain" id="PRO_1000062661" description="Acetyl-coenzyme A carboxylase carboxyl transferase subunit alpha">
    <location>
        <begin position="1"/>
        <end position="323"/>
    </location>
</feature>
<feature type="domain" description="CoA carboxyltransferase C-terminal" evidence="2">
    <location>
        <begin position="39"/>
        <end position="293"/>
    </location>
</feature>
<keyword id="KW-0067">ATP-binding</keyword>
<keyword id="KW-0963">Cytoplasm</keyword>
<keyword id="KW-0275">Fatty acid biosynthesis</keyword>
<keyword id="KW-0276">Fatty acid metabolism</keyword>
<keyword id="KW-0444">Lipid biosynthesis</keyword>
<keyword id="KW-0443">Lipid metabolism</keyword>
<keyword id="KW-0547">Nucleotide-binding</keyword>
<keyword id="KW-1185">Reference proteome</keyword>
<keyword id="KW-0808">Transferase</keyword>
<evidence type="ECO:0000255" key="1">
    <source>
        <dbReference type="HAMAP-Rule" id="MF_00823"/>
    </source>
</evidence>
<evidence type="ECO:0000255" key="2">
    <source>
        <dbReference type="PROSITE-ProRule" id="PRU01137"/>
    </source>
</evidence>
<proteinExistence type="inferred from homology"/>
<organism>
    <name type="scientific">Cupriavidus metallidurans (strain ATCC 43123 / DSM 2839 / NBRC 102507 / CH34)</name>
    <name type="common">Ralstonia metallidurans</name>
    <dbReference type="NCBI Taxonomy" id="266264"/>
    <lineage>
        <taxon>Bacteria</taxon>
        <taxon>Pseudomonadati</taxon>
        <taxon>Pseudomonadota</taxon>
        <taxon>Betaproteobacteria</taxon>
        <taxon>Burkholderiales</taxon>
        <taxon>Burkholderiaceae</taxon>
        <taxon>Cupriavidus</taxon>
    </lineage>
</organism>
<dbReference type="EC" id="2.1.3.15" evidence="1"/>
<dbReference type="EMBL" id="CP000352">
    <property type="protein sequence ID" value="ABF07973.1"/>
    <property type="molecule type" value="Genomic_DNA"/>
</dbReference>
<dbReference type="RefSeq" id="WP_008644552.1">
    <property type="nucleotide sequence ID" value="NC_007973.1"/>
</dbReference>
<dbReference type="SMR" id="Q1LPF3"/>
<dbReference type="STRING" id="266264.Rmet_1087"/>
<dbReference type="KEGG" id="rme:Rmet_1087"/>
<dbReference type="eggNOG" id="COG0825">
    <property type="taxonomic scope" value="Bacteria"/>
</dbReference>
<dbReference type="HOGENOM" id="CLU_015486_0_2_4"/>
<dbReference type="UniPathway" id="UPA00655">
    <property type="reaction ID" value="UER00711"/>
</dbReference>
<dbReference type="Proteomes" id="UP000002429">
    <property type="component" value="Chromosome"/>
</dbReference>
<dbReference type="GO" id="GO:0009317">
    <property type="term" value="C:acetyl-CoA carboxylase complex"/>
    <property type="evidence" value="ECO:0007669"/>
    <property type="project" value="InterPro"/>
</dbReference>
<dbReference type="GO" id="GO:0003989">
    <property type="term" value="F:acetyl-CoA carboxylase activity"/>
    <property type="evidence" value="ECO:0007669"/>
    <property type="project" value="InterPro"/>
</dbReference>
<dbReference type="GO" id="GO:0005524">
    <property type="term" value="F:ATP binding"/>
    <property type="evidence" value="ECO:0007669"/>
    <property type="project" value="UniProtKB-KW"/>
</dbReference>
<dbReference type="GO" id="GO:0016743">
    <property type="term" value="F:carboxyl- or carbamoyltransferase activity"/>
    <property type="evidence" value="ECO:0007669"/>
    <property type="project" value="UniProtKB-UniRule"/>
</dbReference>
<dbReference type="GO" id="GO:0006633">
    <property type="term" value="P:fatty acid biosynthetic process"/>
    <property type="evidence" value="ECO:0007669"/>
    <property type="project" value="UniProtKB-KW"/>
</dbReference>
<dbReference type="GO" id="GO:2001295">
    <property type="term" value="P:malonyl-CoA biosynthetic process"/>
    <property type="evidence" value="ECO:0007669"/>
    <property type="project" value="UniProtKB-UniRule"/>
</dbReference>
<dbReference type="Gene3D" id="3.90.226.10">
    <property type="entry name" value="2-enoyl-CoA Hydratase, Chain A, domain 1"/>
    <property type="match status" value="1"/>
</dbReference>
<dbReference type="HAMAP" id="MF_00823">
    <property type="entry name" value="AcetylCoA_CT_alpha"/>
    <property type="match status" value="1"/>
</dbReference>
<dbReference type="InterPro" id="IPR001095">
    <property type="entry name" value="Acetyl_CoA_COase_a_su"/>
</dbReference>
<dbReference type="InterPro" id="IPR029045">
    <property type="entry name" value="ClpP/crotonase-like_dom_sf"/>
</dbReference>
<dbReference type="InterPro" id="IPR011763">
    <property type="entry name" value="COA_CT_C"/>
</dbReference>
<dbReference type="NCBIfam" id="TIGR00513">
    <property type="entry name" value="accA"/>
    <property type="match status" value="1"/>
</dbReference>
<dbReference type="NCBIfam" id="NF041504">
    <property type="entry name" value="AccA_sub"/>
    <property type="match status" value="1"/>
</dbReference>
<dbReference type="NCBIfam" id="NF004344">
    <property type="entry name" value="PRK05724.1"/>
    <property type="match status" value="1"/>
</dbReference>
<dbReference type="PANTHER" id="PTHR42853">
    <property type="entry name" value="ACETYL-COENZYME A CARBOXYLASE CARBOXYL TRANSFERASE SUBUNIT ALPHA"/>
    <property type="match status" value="1"/>
</dbReference>
<dbReference type="PANTHER" id="PTHR42853:SF3">
    <property type="entry name" value="ACETYL-COENZYME A CARBOXYLASE CARBOXYL TRANSFERASE SUBUNIT ALPHA, CHLOROPLASTIC"/>
    <property type="match status" value="1"/>
</dbReference>
<dbReference type="Pfam" id="PF03255">
    <property type="entry name" value="ACCA"/>
    <property type="match status" value="1"/>
</dbReference>
<dbReference type="PRINTS" id="PR01069">
    <property type="entry name" value="ACCCTRFRASEA"/>
</dbReference>
<dbReference type="SUPFAM" id="SSF52096">
    <property type="entry name" value="ClpP/crotonase"/>
    <property type="match status" value="1"/>
</dbReference>
<dbReference type="PROSITE" id="PS50989">
    <property type="entry name" value="COA_CT_CTER"/>
    <property type="match status" value="1"/>
</dbReference>
<gene>
    <name evidence="1" type="primary">accA</name>
    <name type="ordered locus">Rmet_1087</name>
</gene>